<comment type="function">
    <text evidence="1 5 8">Catalyzes the NAD(+)-dependent oxidation of formate to carbon dioxide. Formate oxidation is the final step in the methanol oxidation pathway in methylotrophic microorganisms. Has a role in the detoxification of exogenous formate in non-methylotrophic organisms.</text>
</comment>
<comment type="catalytic activity">
    <reaction evidence="1 2 4 5 6 8">
        <text>formate + NAD(+) = CO2 + NADH</text>
        <dbReference type="Rhea" id="RHEA:15985"/>
        <dbReference type="ChEBI" id="CHEBI:15740"/>
        <dbReference type="ChEBI" id="CHEBI:16526"/>
        <dbReference type="ChEBI" id="CHEBI:57540"/>
        <dbReference type="ChEBI" id="CHEBI:57945"/>
        <dbReference type="EC" id="1.17.1.9"/>
    </reaction>
</comment>
<comment type="activity regulation">
    <text evidence="5">Cu(2+), Hg and p-chloromercuribenzoate are strong inhibitors of enzyme activity and Ca(2+), Mg(2+), Zn(2+), Mn(2+), Cd(2+) and Sn(2+) have no effect on activity indicating a cysteine residue in the protein is essential for enzyme activity or to maintain the proper structure of the enzyme. Nitrite and nitrate inhibit some enzyme activity, however cyanide, azide, thiocyanate and cyanate are strong inhibitors of the enzymatic reaction. The inhibition of cyanide is competitive with formate and reversible.</text>
</comment>
<comment type="biophysicochemical properties">
    <kinetics>
        <KM evidence="5">13 mM for formate (at 30 degrees Celsius and at pH 7.5)</KM>
        <KM evidence="5">0.09 mM for NAD (at 30 degrees Celsius and at pH 7.5)</KM>
        <KM evidence="2">5.6 mM for formate (at 30 degrees Celsius and at pH 7.5)</KM>
        <KM evidence="2">0.045 mM for NAD (at 30 degrees Celsius and at pH 7.5)</KM>
        <KM evidence="4">2.42 mM for formate (at 25 degrees Celsius and at pH 7.5)</KM>
        <KM evidence="4">0.04 mM for NAD (at 25 degrees Celsius and at pH 7.5)</KM>
        <KM evidence="3">2.4 mM for formate (at 25 degrees Celsius and at pH 7.6)</KM>
        <KM evidence="3">0.04 mM for NAD (at 25 degrees Celsius and at pH 7.6)</KM>
        <KM evidence="6">20 mM for formate (at 20 degrees Celsius, at pH 7.5 and after 2 weeks of storage at 4 degrees Celsius in GF buffer)</KM>
        <KM evidence="6">0.05 mM for NAD (at 20 degrees Celsius, at pH 7.5 and after 2 weeks of storage at 4 degrees Celsius in GF buffer)</KM>
        <KM evidence="6">35 mM for formate (at 20 degrees Celsius, at pH 7.5 and after 4 months of storage at 4 degrees Celsius in GF buffer)</KM>
        <KM evidence="6">0.09 mM for NAD (at 20 degrees Celsius, at pH 7.5 and after 4 months of storage at 4 degrees Celsius in GF buffer)</KM>
        <Vmax evidence="2">6.0 uM/min/mg enzyme</Vmax>
    </kinetics>
    <phDependence>
        <text evidence="2 3 4 5 6">Optimum pH is 7.5-8.5.</text>
    </phDependence>
    <temperatureDependence>
        <text evidence="2 3 4 5 6">Broad temperature optima between 45 and 55 degrees Celsius. Reaction rate increases steeply up to 55 degrees Celsius. 50% of activity lost after incubation for 20 minutes at 57 degrees Celsius. Thermal stability increases in the presence of glycerol.</text>
    </temperatureDependence>
</comment>
<comment type="subunit">
    <text evidence="1 5 6">Homodimer.</text>
</comment>
<comment type="subcellular location">
    <subcellularLocation>
        <location evidence="1">Cytoplasm</location>
    </subcellularLocation>
</comment>
<comment type="induction">
    <text evidence="8">Expression is strongly induced by methanol, but is completely repressed in the presence of glucose. However, methanol induced expression is equally strong in cells grown on glucose when formate, methylamine or choline is added. No expression is detected in cells grown on glycerol. When formate, methylamine or choline is added to the culture medium of glycerol- or glucose-grown cells, they exhibit an induction of FDH1 expression.</text>
</comment>
<comment type="disruption phenotype">
    <text evidence="8">Is able to grow on methanol in a batch culture experiment, but its growth is greatly inhibited and a toxic level of formate accumulates in the medium. Formate is not detected in the medium in a methanol-limited chemostat culture but deletion mutant shows only one-fourth of the growth yield of the wild-type.</text>
</comment>
<comment type="biotechnology">
    <text evidence="2 9">Ideal catalyst for synthesizing chiral compounds of high enantiomeric purity from prochiral precursors due to a favorable thermodynamic equilibrium, the oxidation of formate to carbon dioxide while also reducing NAD to NADH. However, the necessesity for the presence of large quantities of the enzyme and its rapid inactivation under biotransformation conditions results in higher costs for the biocatalyst industry. In order to make this enzymatic reduction viable and to perform it on a larger scale a more efficient and cost effective process has been established. Site-directed mutagenesis has been effective in stabilizing this commercially important enzyme for its application in the biotransformation of trimethyl pyruvate to L-tert leucine.</text>
</comment>
<comment type="similarity">
    <text evidence="1">Belongs to the D-isomer specific 2-hydroxyacid dehydrogenase family. FDH subfamily.</text>
</comment>
<dbReference type="EC" id="1.17.1.9" evidence="1 2 4 5 6 8"/>
<dbReference type="EMBL" id="X81129">
    <property type="protein sequence ID" value="CAA57036.1"/>
    <property type="molecule type" value="Genomic_DNA"/>
</dbReference>
<dbReference type="EMBL" id="AF004096">
    <property type="protein sequence ID" value="AAC49766.1"/>
    <property type="molecule type" value="Genomic_DNA"/>
</dbReference>
<dbReference type="EMBL" id="AJ245934">
    <property type="protein sequence ID" value="CAB54834.1"/>
    <property type="molecule type" value="Genomic_DNA"/>
</dbReference>
<dbReference type="EMBL" id="AJ011046">
    <property type="protein sequence ID" value="CAA09466.2"/>
    <property type="molecule type" value="Genomic_DNA"/>
</dbReference>
<dbReference type="EMBL" id="DQ458777">
    <property type="protein sequence ID" value="ABE69165.2"/>
    <property type="molecule type" value="Genomic_DNA"/>
</dbReference>
<dbReference type="PIR" id="JC4252">
    <property type="entry name" value="JC4252"/>
</dbReference>
<dbReference type="PDB" id="2FSS">
    <property type="method" value="X-ray"/>
    <property type="resolution" value="1.70 A"/>
    <property type="chains" value="A/B/C/D=2-364"/>
</dbReference>
<dbReference type="PDB" id="2J6I">
    <property type="method" value="X-ray"/>
    <property type="resolution" value="1.55 A"/>
    <property type="chains" value="A/B/C/D=2-364"/>
</dbReference>
<dbReference type="PDBsum" id="2FSS"/>
<dbReference type="PDBsum" id="2J6I"/>
<dbReference type="SMR" id="O13437"/>
<dbReference type="OrthoDB" id="418179at2759"/>
<dbReference type="BioCyc" id="MetaCyc:MONOMER-17206"/>
<dbReference type="BRENDA" id="1.17.1.9">
    <property type="organism ID" value="1100"/>
</dbReference>
<dbReference type="SABIO-RK" id="O13437"/>
<dbReference type="EvolutionaryTrace" id="O13437"/>
<dbReference type="GO" id="GO:0005829">
    <property type="term" value="C:cytosol"/>
    <property type="evidence" value="ECO:0000250"/>
    <property type="project" value="UniProtKB"/>
</dbReference>
<dbReference type="GO" id="GO:0005524">
    <property type="term" value="F:ATP binding"/>
    <property type="evidence" value="ECO:0007669"/>
    <property type="project" value="UniProtKB-KW"/>
</dbReference>
<dbReference type="GO" id="GO:0008863">
    <property type="term" value="F:formate dehydrogenase (NAD+) activity"/>
    <property type="evidence" value="ECO:0000314"/>
    <property type="project" value="UniProtKB"/>
</dbReference>
<dbReference type="GO" id="GO:0070403">
    <property type="term" value="F:NAD+ binding"/>
    <property type="evidence" value="ECO:0000314"/>
    <property type="project" value="UniProtKB"/>
</dbReference>
<dbReference type="GO" id="GO:0016616">
    <property type="term" value="F:oxidoreductase activity, acting on the CH-OH group of donors, NAD or NADP as acceptor"/>
    <property type="evidence" value="ECO:0007669"/>
    <property type="project" value="InterPro"/>
</dbReference>
<dbReference type="GO" id="GO:0042803">
    <property type="term" value="F:protein homodimerization activity"/>
    <property type="evidence" value="ECO:0000314"/>
    <property type="project" value="UniProtKB"/>
</dbReference>
<dbReference type="GO" id="GO:0042426">
    <property type="term" value="P:choline catabolic process"/>
    <property type="evidence" value="ECO:0000315"/>
    <property type="project" value="UniProtKB"/>
</dbReference>
<dbReference type="GO" id="GO:0042183">
    <property type="term" value="P:formate catabolic process"/>
    <property type="evidence" value="ECO:0000314"/>
    <property type="project" value="UniProtKB"/>
</dbReference>
<dbReference type="GO" id="GO:0015946">
    <property type="term" value="P:methanol oxidation"/>
    <property type="evidence" value="ECO:0000315"/>
    <property type="project" value="UniProtKB"/>
</dbReference>
<dbReference type="GO" id="GO:0030416">
    <property type="term" value="P:methylamine metabolic process"/>
    <property type="evidence" value="ECO:0000315"/>
    <property type="project" value="UniProtKB"/>
</dbReference>
<dbReference type="CDD" id="cd05302">
    <property type="entry name" value="FDH"/>
    <property type="match status" value="1"/>
</dbReference>
<dbReference type="FunFam" id="3.40.50.720:FF:000057">
    <property type="entry name" value="Formate dehydrogenase"/>
    <property type="match status" value="1"/>
</dbReference>
<dbReference type="Gene3D" id="3.40.50.720">
    <property type="entry name" value="NAD(P)-binding Rossmann-like Domain"/>
    <property type="match status" value="2"/>
</dbReference>
<dbReference type="HAMAP" id="MF_03210">
    <property type="entry name" value="Formate_dehydrogenase"/>
    <property type="match status" value="1"/>
</dbReference>
<dbReference type="InterPro" id="IPR006139">
    <property type="entry name" value="D-isomer_2_OHA_DH_cat_dom"/>
</dbReference>
<dbReference type="InterPro" id="IPR029753">
    <property type="entry name" value="D-isomer_DH_CS"/>
</dbReference>
<dbReference type="InterPro" id="IPR029752">
    <property type="entry name" value="D-isomer_DH_CS1"/>
</dbReference>
<dbReference type="InterPro" id="IPR006140">
    <property type="entry name" value="D-isomer_DH_NAD-bd"/>
</dbReference>
<dbReference type="InterPro" id="IPR033689">
    <property type="entry name" value="FDH_NAD-dep"/>
</dbReference>
<dbReference type="InterPro" id="IPR036291">
    <property type="entry name" value="NAD(P)-bd_dom_sf"/>
</dbReference>
<dbReference type="NCBIfam" id="NF005750">
    <property type="entry name" value="PRK07574.1"/>
    <property type="match status" value="1"/>
</dbReference>
<dbReference type="PANTHER" id="PTHR42938">
    <property type="entry name" value="FORMATE DEHYDROGENASE 1"/>
    <property type="match status" value="1"/>
</dbReference>
<dbReference type="PANTHER" id="PTHR42938:SF9">
    <property type="entry name" value="FORMATE DEHYDROGENASE 1"/>
    <property type="match status" value="1"/>
</dbReference>
<dbReference type="Pfam" id="PF00389">
    <property type="entry name" value="2-Hacid_dh"/>
    <property type="match status" value="1"/>
</dbReference>
<dbReference type="Pfam" id="PF02826">
    <property type="entry name" value="2-Hacid_dh_C"/>
    <property type="match status" value="1"/>
</dbReference>
<dbReference type="SUPFAM" id="SSF52283">
    <property type="entry name" value="Formate/glycerate dehydrogenase catalytic domain-like"/>
    <property type="match status" value="1"/>
</dbReference>
<dbReference type="SUPFAM" id="SSF51735">
    <property type="entry name" value="NAD(P)-binding Rossmann-fold domains"/>
    <property type="match status" value="1"/>
</dbReference>
<dbReference type="PROSITE" id="PS00065">
    <property type="entry name" value="D_2_HYDROXYACID_DH_1"/>
    <property type="match status" value="1"/>
</dbReference>
<dbReference type="PROSITE" id="PS00670">
    <property type="entry name" value="D_2_HYDROXYACID_DH_2"/>
    <property type="match status" value="1"/>
</dbReference>
<dbReference type="PROSITE" id="PS00671">
    <property type="entry name" value="D_2_HYDROXYACID_DH_3"/>
    <property type="match status" value="1"/>
</dbReference>
<keyword id="KW-0002">3D-structure</keyword>
<keyword id="KW-0067">ATP-binding</keyword>
<keyword id="KW-0963">Cytoplasm</keyword>
<keyword id="KW-0903">Direct protein sequencing</keyword>
<keyword id="KW-0520">NAD</keyword>
<keyword id="KW-0547">Nucleotide-binding</keyword>
<keyword id="KW-0560">Oxidoreductase</keyword>
<accession>O13437</accession>
<accession>O93968</accession>
<accession>Q00498</accession>
<accession>Q1PAH3</accession>
<evidence type="ECO:0000255" key="1">
    <source>
        <dbReference type="HAMAP-Rule" id="MF_03210"/>
    </source>
</evidence>
<evidence type="ECO:0000269" key="2">
    <source>
    </source>
</evidence>
<evidence type="ECO:0000269" key="3">
    <source>
    </source>
</evidence>
<evidence type="ECO:0000269" key="4">
    <source>
    </source>
</evidence>
<evidence type="ECO:0000269" key="5">
    <source>
    </source>
</evidence>
<evidence type="ECO:0000269" key="6">
    <source>
    </source>
</evidence>
<evidence type="ECO:0000269" key="7">
    <source>
    </source>
</evidence>
<evidence type="ECO:0000269" key="8">
    <source>
    </source>
</evidence>
<evidence type="ECO:0000269" key="9">
    <source ref="8"/>
</evidence>
<evidence type="ECO:0000303" key="10">
    <source>
    </source>
</evidence>
<evidence type="ECO:0000305" key="11"/>
<evidence type="ECO:0000305" key="12">
    <source>
    </source>
</evidence>
<evidence type="ECO:0000312" key="13">
    <source>
        <dbReference type="EMBL" id="AAC49766.1"/>
    </source>
</evidence>
<evidence type="ECO:0000312" key="14">
    <source>
        <dbReference type="EMBL" id="ABE69165.2"/>
    </source>
</evidence>
<evidence type="ECO:0000312" key="15">
    <source>
        <dbReference type="EMBL" id="CAA09466.2"/>
    </source>
</evidence>
<evidence type="ECO:0000312" key="16">
    <source>
        <dbReference type="EMBL" id="CAB54834.1"/>
    </source>
</evidence>
<evidence type="ECO:0007829" key="17">
    <source>
        <dbReference type="PDB" id="2FSS"/>
    </source>
</evidence>
<evidence type="ECO:0007829" key="18">
    <source>
        <dbReference type="PDB" id="2J6I"/>
    </source>
</evidence>
<protein>
    <recommendedName>
        <fullName evidence="1 16">Formate dehydrogenase</fullName>
        <shortName evidence="1">FDH</shortName>
        <ecNumber evidence="1 2 4 5 6 8">1.17.1.9</ecNumber>
    </recommendedName>
    <alternativeName>
        <fullName evidence="1 13">NAD-dependent formate dehydrogenase</fullName>
    </alternativeName>
</protein>
<gene>
    <name evidence="10 13" type="primary">FDH1</name>
    <name evidence="15" type="synonym">FDH</name>
    <name evidence="16" type="synonym">FDH3</name>
</gene>
<name>FDH_CANBO</name>
<organism>
    <name type="scientific">Candida boidinii</name>
    <name type="common">Yeast</name>
    <dbReference type="NCBI Taxonomy" id="5477"/>
    <lineage>
        <taxon>Eukaryota</taxon>
        <taxon>Fungi</taxon>
        <taxon>Dikarya</taxon>
        <taxon>Ascomycota</taxon>
        <taxon>Saccharomycotina</taxon>
        <taxon>Pichiomycetes</taxon>
        <taxon>Pichiales</taxon>
        <taxon>Pichiaceae</taxon>
        <taxon>Ogataea</taxon>
        <taxon>Ogataea/Candida clade</taxon>
    </lineage>
</organism>
<proteinExistence type="evidence at protein level"/>
<reference key="1">
    <citation type="journal article" date="1995" name="Gene">
        <title>Isolation, sequence and overexpression of the gene encoding NAD-dependent formate dehydrogenase from the methylotrophic yeast Candida methylica.</title>
        <authorList>
            <person name="Allen S.J."/>
            <person name="Holbrook J.J."/>
        </authorList>
    </citation>
    <scope>NUCLEOTIDE SEQUENCE [GENOMIC DNA]</scope>
    <scope>PROTEIN SEQUENCE OF 1-25</scope>
    <source>
        <strain>ATCC 56294 / CBS 8030 / CCRC 21757 / NRRL Y-17325</strain>
    </source>
</reference>
<reference key="2">
    <citation type="journal article" date="1997" name="J. Bacteriol.">
        <title>Regulation of the formate dehydrogenase gene, FDH1, in the methylotrophic yeast Candida boidinii and growth characteristics of an FDH1-disrupted strain on methanol, methylamine, and choline.</title>
        <authorList>
            <person name="Sakai Y."/>
            <person name="Murdanoto A.P."/>
            <person name="Konishi T."/>
            <person name="Iwamatsu A."/>
            <person name="Kato N."/>
        </authorList>
    </citation>
    <scope>NUCLEOTIDE SEQUENCE [MRNA]</scope>
    <scope>PROTEIN SEQUENCE OF 2-45; 57-76; 87-103; 190-201; 207-236; 242-246; 292-326 AND 329-354</scope>
    <scope>FUNCTION</scope>
    <scope>CATALYTIC ACTIVITY</scope>
    <scope>DISRUPTION PHENOTYPE</scope>
    <scope>INDUCTION</scope>
    <source>
        <strain evidence="13">S2</strain>
    </source>
</reference>
<reference key="3">
    <citation type="journal article" date="2000" name="Eur. J. Biochem.">
        <title>Stabilization of NAD-dependent formate dehydrogenase from Candida boidinii by site-directed mutagenesis of cysteine residues.</title>
        <authorList>
            <person name="Slusarczyk H."/>
            <person name="Felber S."/>
            <person name="Kula M.R."/>
            <person name="Pohl M."/>
        </authorList>
    </citation>
    <scope>NUCLEOTIDE SEQUENCE [MRNA]</scope>
    <scope>PROTEIN SEQUENCE OF 1-15</scope>
    <scope>CATALYTIC ACTIVITY</scope>
    <scope>BIOPHYSICOCHEMICAL PROPERTIES</scope>
    <scope>BIOTECHNOLOGY</scope>
    <scope>MUTAGENESIS OF CYS-23 AND CYS-262</scope>
    <source>
        <strain evidence="16">ATCC 32195</strain>
    </source>
</reference>
<reference key="4">
    <citation type="journal article" date="2001" name="Biochem. J.">
        <title>Active-site characterization of Candida boidinii formate dehydrogenase.</title>
        <authorList>
            <person name="Labrou N.E."/>
            <person name="Rigden D.J."/>
        </authorList>
    </citation>
    <scope>NUCLEOTIDE SEQUENCE [MRNA]</scope>
    <scope>PROTEIN SEQUENCE OF 1-30 AND 132-140</scope>
    <scope>CATALYTIC ACTIVITY</scope>
    <scope>BIOPHYSICOCHEMICAL PROPERTIES</scope>
    <scope>MUTAGENESIS OF PHE-69; ASN-119; ILE-175; GLN-197; ARG-258; GLN-287; PRO-288 AND HIS-311</scope>
    <source>
        <strain evidence="15">NCYC 1513</strain>
    </source>
</reference>
<reference key="5">
    <citation type="submission" date="2007-07" db="EMBL/GenBank/DDBJ databases">
        <authorList>
            <person name="Zhang G."/>
            <person name="Yang G."/>
            <person name="Cao Z."/>
            <person name="Liu M."/>
        </authorList>
    </citation>
    <scope>NUCLEOTIDE SEQUENCE [MRNA]</scope>
    <source>
        <strain evidence="14">2.2159</strain>
    </source>
</reference>
<reference key="6">
    <citation type="journal article" date="2000" name="Eur. J. Biochem.">
        <title>Characterization of the NAD+ binding site of Candida boidinii formate dehydrogenase by affinity labelling and site-directed mutagenesis.</title>
        <authorList>
            <person name="Labrou N.E."/>
            <person name="Rigden D.J."/>
            <person name="Clonis Y.D."/>
        </authorList>
    </citation>
    <scope>PROTEIN SEQUENCE OF 357-363</scope>
    <scope>BIOPHYSICOCHEMICAL PROPERTIES</scope>
    <scope>MUTAGENESIS OF LYS-360</scope>
</reference>
<reference key="7">
    <citation type="journal article" date="1976" name="Eur. J. Biochem.">
        <title>Purification and properties of formaldehyde dehydrogenase and formate dehydrogenase from Candida boidinii.</title>
        <authorList>
            <person name="Schute H."/>
            <person name="Flossdorf J."/>
            <person name="Sahm H."/>
            <person name="Kula M.R."/>
        </authorList>
    </citation>
    <scope>FUNCTION</scope>
    <scope>CATALYTIC ACTIVITY</scope>
    <scope>ACTIVITY REGULATION</scope>
    <scope>BIOPHYSICOCHEMICAL PROPERTIES</scope>
    <scope>SUBUNIT</scope>
</reference>
<reference key="8">
    <citation type="journal article" date="1994" name="Chem. Eng. Technol.">
        <title>Continuous computer controlled production of formate dehydrogenase (FDH) and isolation on a pilot scale.</title>
        <authorList>
            <person name="Weuster-Botz D."/>
            <person name="Paschold H."/>
            <person name="Striegel B."/>
            <person name="Gieren H."/>
            <person name="Kula M.R."/>
            <person name="Wandrey C."/>
        </authorList>
    </citation>
    <scope>BIOTECHNOLOGY</scope>
</reference>
<reference key="9">
    <citation type="journal article" date="2007" name="Protein Sci.">
        <title>High-resolution structures of formate dehydrogenase from Candida boidinii.</title>
        <authorList>
            <person name="Schirwitz K."/>
            <person name="Schmidt A."/>
            <person name="Lamzin V.S."/>
        </authorList>
    </citation>
    <scope>X-RAY CRYSTALLOGRAPHY (1.7 ANGSTROMS) OF MUTANT GLU-47 AND (1.55 ANGSTROMS) OF MUTANT VAL-328</scope>
    <scope>CATALYTIC ACTIVITY</scope>
    <scope>BIOPHYSICOCHEMICAL PROPERTIES</scope>
    <scope>SUBUNIT</scope>
    <scope>CATALYTIC AND COENZYME-BINDING REGIONS</scope>
    <scope>MUTAGENESIS OF LYS-47 AND LYS-328</scope>
</reference>
<feature type="chain" id="PRO_0000393949" description="Formate dehydrogenase">
    <location>
        <begin position="1"/>
        <end position="364"/>
    </location>
</feature>
<feature type="binding site" evidence="1">
    <location>
        <position position="93"/>
    </location>
    <ligand>
        <name>substrate</name>
    </ligand>
</feature>
<feature type="binding site" evidence="1">
    <location>
        <position position="119"/>
    </location>
    <ligand>
        <name>substrate</name>
    </ligand>
</feature>
<feature type="binding site" evidence="1">
    <location>
        <begin position="174"/>
        <end position="175"/>
    </location>
    <ligand>
        <name>NAD(+)</name>
        <dbReference type="ChEBI" id="CHEBI:57540"/>
    </ligand>
</feature>
<feature type="binding site" evidence="1">
    <location>
        <position position="195"/>
    </location>
    <ligand>
        <name>NAD(+)</name>
        <dbReference type="ChEBI" id="CHEBI:57540"/>
    </ligand>
</feature>
<feature type="binding site" evidence="1">
    <location>
        <begin position="230"/>
        <end position="234"/>
    </location>
    <ligand>
        <name>NAD(+)</name>
        <dbReference type="ChEBI" id="CHEBI:57540"/>
    </ligand>
</feature>
<feature type="binding site" evidence="1">
    <location>
        <position position="256"/>
    </location>
    <ligand>
        <name>NAD(+)</name>
        <dbReference type="ChEBI" id="CHEBI:57540"/>
    </ligand>
</feature>
<feature type="binding site" evidence="1">
    <location>
        <position position="282"/>
    </location>
    <ligand>
        <name>NAD(+)</name>
        <dbReference type="ChEBI" id="CHEBI:57540"/>
    </ligand>
</feature>
<feature type="binding site" evidence="1">
    <location>
        <begin position="311"/>
        <end position="314"/>
    </location>
    <ligand>
        <name>NAD(+)</name>
        <dbReference type="ChEBI" id="CHEBI:57540"/>
    </ligand>
</feature>
<feature type="site" description="Important for catalytic activity" evidence="1 12">
    <location>
        <position position="258"/>
    </location>
</feature>
<feature type="site" description="Important for catalytic activity" evidence="1 12">
    <location>
        <position position="311"/>
    </location>
</feature>
<feature type="sequence variant" description="In strain: 2.2159." evidence="11 14">
    <original>D</original>
    <variation>G</variation>
    <location>
        <position position="9"/>
    </location>
</feature>
<feature type="sequence variant" description="In strain: 2.2159 and NCYC 1513." evidence="4">
    <original>ET</original>
    <variation>GN</variation>
    <location>
        <begin position="50"/>
        <end position="51"/>
    </location>
</feature>
<feature type="sequence variant" description="In strain: 2.2159 and NCYC 1513." evidence="4">
    <original>E</original>
    <variation>V</variation>
    <location>
        <position position="53"/>
    </location>
</feature>
<feature type="sequence variant" description="In strain: 2.2159 and NCYC 1513." evidence="4">
    <original>K</original>
    <variation>Q</variation>
    <location>
        <position position="56"/>
    </location>
</feature>
<feature type="sequence variant" description="In strain: 2.2159 and NCYC 1513." evidence="4">
    <original>L</original>
    <variation>I</variation>
    <location>
        <position position="79"/>
    </location>
</feature>
<feature type="sequence variant" description="In strain: 2.2159 and NCYC 1513." evidence="4">
    <original>N</original>
    <variation>K</variation>
    <location>
        <position position="84"/>
    </location>
</feature>
<feature type="sequence variant" description="In strain: ATCC 56294 / CBS 8030 / CCRC 21757 / NRRL Y-17325." evidence="7">
    <original>L</original>
    <variation>S</variation>
    <location>
        <position position="87"/>
    </location>
</feature>
<feature type="sequence variant" description="In strain: 2.2159." evidence="11 14">
    <original>K</original>
    <variation>R</variation>
    <location>
        <position position="108"/>
    </location>
</feature>
<feature type="sequence variant" description="In strain: 2.2159." evidence="11 14">
    <original>I</original>
    <variation>N</variation>
    <location>
        <position position="145"/>
    </location>
</feature>
<feature type="sequence variant" description="In strain: 2.2159 and NCYC 1513." evidence="4">
    <original>L</original>
    <variation>V</variation>
    <location>
        <position position="184"/>
    </location>
</feature>
<feature type="sequence variant" description="In strain: 2.2159 and NCYC 1513." evidence="4">
    <original>E</original>
    <variation>D</variation>
    <location>
        <position position="202"/>
    </location>
</feature>
<feature type="sequence variant" description="In strain: 2.2159." evidence="11 14">
    <original>M</original>
    <variation>T</variation>
    <location>
        <position position="308"/>
    </location>
</feature>
<feature type="sequence variant" description="In strain: 2.2159 and NCYC 1513." evidence="4">
    <original>E</original>
    <variation>Q</variation>
    <location>
        <position position="325"/>
    </location>
</feature>
<feature type="mutagenesis site" description="Slight increase in substrate affinity for formate but no change in affinity for NAD, 9 degrees Celsius decrease in thermal stability compared to the wild-type, significantly higher stability compared to wild-type under biotransformation conditions, significantly more stable in the presence of CuCl(2); when associated with A-262. Large increase in substrate affinity for formate but no significant change in affinity for NAD, 13 degrees Celsius decrease in thermal stability compared to the wild-type, significantly more stable in the presence of CuCl(2); when associated with V-262. No significant change in affinity for formate or NAD, 5 degrees Celsius decrease in thermal stability compared to the wild-type, significantly higher stability compared to wild-type under biotransformation conditions, and significantly more stable in the presence of CuCl(2)." evidence="2">
    <original>C</original>
    <variation>S</variation>
    <location>
        <position position="23"/>
    </location>
</feature>
<feature type="mutagenesis site" description="Slight increase in substrate affinity for formate and also affinity for NAD increases by half after 2 weeks. Also after 4 months affinity for formate increases by more than half and affinity for NAD increases by more than half. Retains 84% of residual activity after incubation for 20 minutes at a thermal inactivation temperature of 55 degrees Celsius in samples stored for 2 weeks compared to wild-type which loses 50% of its activity at 55 degrees Celsius." evidence="6">
    <original>K</original>
    <variation>E</variation>
    <location>
        <position position="47"/>
    </location>
</feature>
<feature type="mutagenesis site" description="2-fold decrease in substrate affinity for formate, but no significant change in affinity for NAD. A significant reduction in catalytic activity compared to the wild-type." evidence="4">
    <original>F</original>
    <variation>A</variation>
    <location>
        <position position="69"/>
    </location>
</feature>
<feature type="mutagenesis site" description="94-fold decrease in substrate affinity for formate and 2700-fold decrease in substrate affinity for NAD. A significant reduction in catalytic activity compared to the wild-type; when associated with A-311." evidence="4">
    <original>N</original>
    <variation>A</variation>
    <location>
        <position position="119"/>
    </location>
</feature>
<feature type="mutagenesis site" description="80-fold decrease in substrate affinity for formate and a 1250-fold decrease in substrate affinity for NAD. A significant reduction in catalytic activity compared to the wild-type." evidence="4">
    <original>N</original>
    <variation>H</variation>
    <location>
        <position position="119"/>
    </location>
</feature>
<feature type="mutagenesis site" description="2-fold decrease in substrate affinity for formate and a 12-fold decrease in substrate affinity for NAD. A significant reduction in catalytic activity compared to the wild-type." evidence="4">
    <original>I</original>
    <variation>A</variation>
    <location>
        <position position="175"/>
    </location>
</feature>
<feature type="mutagenesis site" description="4-fold decrease in substrate affinity for formate but no significant change in affinity for NAD compared to the wild-type." evidence="4">
    <original>Q</original>
    <variation>L</variation>
    <location>
        <position position="197"/>
    </location>
</feature>
<feature type="mutagenesis site" description="No catalytic activity." evidence="4">
    <original>R</original>
    <variation>A</variation>
    <location>
        <position position="258"/>
    </location>
</feature>
<feature type="mutagenesis site" description="Slight increase in substrate affinity for formate but no change in affinity for NAD, 9 degrees Celsius decrease in thermal stability compared to the wild-type, greater stability at a higher pH compared to the wild-type; when associated with S-23." evidence="2">
    <original>C</original>
    <variation>A</variation>
    <location>
        <position position="262"/>
    </location>
</feature>
<feature type="mutagenesis site" description="Large increase in substrate affinity for formate but no significant change in affinity for NAD, 13 degrees Celsius decrease in thermal stability compared to the wild-type; when associated with S-23. Great increase in substrate affinity for formate and NAD and 8 degrees Celsius decrease in thermal stability compared to the wild-type." evidence="2">
    <original>C</original>
    <variation>V</variation>
    <location>
        <position position="262"/>
    </location>
</feature>
<feature type="mutagenesis site" description="2-fold decrease in substrate affinity for formate and 3-fold decrease in substrate affinity for NAD compared to the wild-type; when associated with A-311." evidence="4">
    <original>Q</original>
    <variation>A</variation>
    <location>
        <position position="287"/>
    </location>
</feature>
<feature type="mutagenesis site" description="380-fold decrease in substrate affinity for formate and 3-fold decrease in substrate affinity for NAD compared to the wild-type; when associated with T-288. No significant decrease in substrate affinity for formate but a 4-fold decrease in substrate affinity for NAD and a significant reduction in catalytic activity compared to the wild-type, a more acidic pH is seen than in the wild-type, preventing formate binding by a single ionization of a group compared to that of the wild-type." evidence="4">
    <original>Q</original>
    <variation>E</variation>
    <location>
        <position position="287"/>
    </location>
</feature>
<feature type="mutagenesis site" description="380-fold decrease in substrate affinity for formate and 3-fold decrease in substrate affinity for NAD compared to the wild-type; when associated with E-287." evidence="4">
    <original>P</original>
    <variation>T</variation>
    <location>
        <position position="288"/>
    </location>
</feature>
<feature type="mutagenesis site" description="2-fold decrease in substrate affinity for formate and 3-fold decrease in substrate affinity for NAD compared to the wild-type; when associated with A-287. 93-fold decrease in substrate affinity for formate and 2700-fold decrease in substrate affinity for NAD, and a significant reduction in catalytic activity compared to the wild-type; when associated with A-119." evidence="4">
    <original>H</original>
    <variation>A</variation>
    <location>
        <position position="311"/>
    </location>
</feature>
<feature type="mutagenesis site" description="10-fold decrease in substrate affinity for formate and significant reduction in the catalytic activity compared to the wild-type." evidence="4">
    <original>H</original>
    <variation>Q</variation>
    <location>
        <position position="311"/>
    </location>
</feature>
<feature type="mutagenesis site" description="A 75% increase in substrate affinity for formate after 2 weeks and a 50% increase in affinity for NAD. However, after 4 months the affinity for formate increases 7-fold and affinity for NAD increases by 2 thirds. Retains 70% of residual activity after incubation for 20 minutes at a thermal inactivation temperature of 55 degrees Celsius in samples stored for 2 weeks compared to wild-type which loses 50% of its activity at 55 degrees Celsius." evidence="6">
    <original>K</original>
    <variation>V</variation>
    <location>
        <position position="328"/>
    </location>
</feature>
<feature type="mutagenesis site" description="Exhibits no change in substrate affinity for formate, but shows a 4-fold decrease in substrate affinity for NAD implying that L-360 side chain forms strong interactions with the cofactor. A higher reaction rate is observed at an acidic and basic pH values." evidence="3">
    <original>K</original>
    <variation>A</variation>
    <location>
        <position position="360"/>
    </location>
</feature>
<feature type="sequence conflict" description="In Ref. 4; AA sequence." evidence="11" ref="4">
    <original>KLYGC</original>
    <variation>EKLYG</variation>
    <location>
        <begin position="19"/>
        <end position="23"/>
    </location>
</feature>
<feature type="sequence conflict" description="In Ref. 1; AA sequence." evidence="11" ref="1">
    <original>C</original>
    <variation>T</variation>
    <location>
        <position position="23"/>
    </location>
</feature>
<feature type="strand" evidence="18">
    <location>
        <begin position="2"/>
        <end position="6"/>
    </location>
</feature>
<feature type="helix" evidence="18">
    <location>
        <begin position="12"/>
        <end position="16"/>
    </location>
</feature>
<feature type="turn" evidence="18">
    <location>
        <begin position="24"/>
        <end position="26"/>
    </location>
</feature>
<feature type="helix" evidence="18">
    <location>
        <begin position="27"/>
        <end position="29"/>
    </location>
</feature>
<feature type="helix" evidence="18">
    <location>
        <begin position="31"/>
        <end position="36"/>
    </location>
</feature>
<feature type="strand" evidence="18">
    <location>
        <begin position="40"/>
        <end position="45"/>
    </location>
</feature>
<feature type="strand" evidence="17">
    <location>
        <begin position="49"/>
        <end position="52"/>
    </location>
</feature>
<feature type="helix" evidence="18">
    <location>
        <begin position="53"/>
        <end position="57"/>
    </location>
</feature>
<feature type="helix" evidence="18">
    <location>
        <begin position="58"/>
        <end position="60"/>
    </location>
</feature>
<feature type="strand" evidence="18">
    <location>
        <begin position="62"/>
        <end position="66"/>
    </location>
</feature>
<feature type="helix" evidence="18">
    <location>
        <begin position="76"/>
        <end position="81"/>
    </location>
</feature>
<feature type="strand" evidence="18">
    <location>
        <begin position="87"/>
        <end position="93"/>
    </location>
</feature>
<feature type="helix" evidence="18">
    <location>
        <begin position="100"/>
        <end position="106"/>
    </location>
</feature>
<feature type="strand" evidence="18">
    <location>
        <begin position="111"/>
        <end position="114"/>
    </location>
</feature>
<feature type="helix" evidence="18">
    <location>
        <begin position="120"/>
        <end position="135"/>
    </location>
</feature>
<feature type="helix" evidence="18">
    <location>
        <begin position="138"/>
        <end position="146"/>
    </location>
</feature>
<feature type="helix" evidence="18">
    <location>
        <begin position="152"/>
        <end position="156"/>
    </location>
</feature>
<feature type="strand" evidence="18">
    <location>
        <begin position="166"/>
        <end position="170"/>
    </location>
</feature>
<feature type="helix" evidence="18">
    <location>
        <begin position="174"/>
        <end position="183"/>
    </location>
</feature>
<feature type="helix" evidence="18">
    <location>
        <begin position="184"/>
        <end position="186"/>
    </location>
</feature>
<feature type="strand" evidence="18">
    <location>
        <begin position="189"/>
        <end position="194"/>
    </location>
</feature>
<feature type="helix" evidence="18">
    <location>
        <begin position="201"/>
        <end position="206"/>
    </location>
</feature>
<feature type="strand" evidence="18">
    <location>
        <begin position="209"/>
        <end position="211"/>
    </location>
</feature>
<feature type="helix" evidence="18">
    <location>
        <begin position="215"/>
        <end position="220"/>
    </location>
</feature>
<feature type="strand" evidence="18">
    <location>
        <begin position="223"/>
        <end position="227"/>
    </location>
</feature>
<feature type="turn" evidence="18">
    <location>
        <begin position="233"/>
        <end position="237"/>
    </location>
</feature>
<feature type="helix" evidence="18">
    <location>
        <begin position="241"/>
        <end position="244"/>
    </location>
</feature>
<feature type="strand" evidence="18">
    <location>
        <begin position="251"/>
        <end position="255"/>
    </location>
</feature>
<feature type="helix" evidence="18">
    <location>
        <begin position="259"/>
        <end position="261"/>
    </location>
</feature>
<feature type="helix" evidence="18">
    <location>
        <begin position="264"/>
        <end position="272"/>
    </location>
</feature>
<feature type="strand" evidence="18">
    <location>
        <begin position="275"/>
        <end position="282"/>
    </location>
</feature>
<feature type="strand" evidence="18">
    <location>
        <begin position="285"/>
        <end position="288"/>
    </location>
</feature>
<feature type="helix" evidence="18">
    <location>
        <begin position="294"/>
        <end position="297"/>
    </location>
</feature>
<feature type="strand" evidence="18">
    <location>
        <begin position="306"/>
        <end position="308"/>
    </location>
</feature>
<feature type="helix" evidence="18">
    <location>
        <begin position="313"/>
        <end position="315"/>
    </location>
</feature>
<feature type="helix" evidence="18">
    <location>
        <begin position="317"/>
        <end position="335"/>
    </location>
</feature>
<feature type="helix" evidence="18">
    <location>
        <begin position="343"/>
        <end position="345"/>
    </location>
</feature>
<feature type="strand" evidence="18">
    <location>
        <begin position="346"/>
        <end position="349"/>
    </location>
</feature>
<sequence>MKIVLVLYDAGKHAADEEKLYGCTENKLGIANWLKDQGHELITTSDKEGETSELDKHIPDADIIITTPFHPAYITKERLDKAKNLKLVVVAGVGSDHIDLDYINQTGKKISVLEVTGSNVVSVAEHVVMTMLVLVRNFVPAHEQIINHDWEVAAIAKDAYDIEGKTIATIGAGRIGYRVLERLLPFNPKELLYYDYQALPKEAEEKVGARRVENIEELVAQADIVTVNAPLHAGTKGLINKELLSKFKKGAWLVNTARGAICVAEDVAAALESGQLRGYGGDVWFPQPAPKDHPWRDMRNKYGAGNAMTPHYSGTTLDAQTRYAEGTKNILESFFTGKFDYRPQDIILLNGEYVTKAYGKHDKK</sequence>